<comment type="function">
    <text evidence="1">Catalyzes the 2'-O-methylation at nucleotide C2498 in 23S rRNA.</text>
</comment>
<comment type="catalytic activity">
    <reaction evidence="1">
        <text>cytidine(2498) in 23S rRNA + S-adenosyl-L-methionine = 2'-O-methylcytidine(2498) in 23S rRNA + S-adenosyl-L-homocysteine + H(+)</text>
        <dbReference type="Rhea" id="RHEA:42788"/>
        <dbReference type="Rhea" id="RHEA-COMP:10244"/>
        <dbReference type="Rhea" id="RHEA-COMP:10245"/>
        <dbReference type="ChEBI" id="CHEBI:15378"/>
        <dbReference type="ChEBI" id="CHEBI:57856"/>
        <dbReference type="ChEBI" id="CHEBI:59789"/>
        <dbReference type="ChEBI" id="CHEBI:74495"/>
        <dbReference type="ChEBI" id="CHEBI:82748"/>
        <dbReference type="EC" id="2.1.1.186"/>
    </reaction>
</comment>
<comment type="subunit">
    <text evidence="1">Monomer.</text>
</comment>
<comment type="subcellular location">
    <subcellularLocation>
        <location evidence="1">Cytoplasm</location>
    </subcellularLocation>
</comment>
<comment type="similarity">
    <text evidence="1">Belongs to the class I-like SAM-binding methyltransferase superfamily. RNA methyltransferase RlmE family. RlmM subfamily.</text>
</comment>
<organism>
    <name type="scientific">Escherichia coli O6:H1 (strain CFT073 / ATCC 700928 / UPEC)</name>
    <dbReference type="NCBI Taxonomy" id="199310"/>
    <lineage>
        <taxon>Bacteria</taxon>
        <taxon>Pseudomonadati</taxon>
        <taxon>Pseudomonadota</taxon>
        <taxon>Gammaproteobacteria</taxon>
        <taxon>Enterobacterales</taxon>
        <taxon>Enterobacteriaceae</taxon>
        <taxon>Escherichia</taxon>
    </lineage>
</organism>
<accession>Q8FEE5</accession>
<gene>
    <name evidence="1" type="primary">rlmM</name>
    <name type="ordered locus">c3376</name>
</gene>
<proteinExistence type="inferred from homology"/>
<dbReference type="EC" id="2.1.1.186" evidence="1"/>
<dbReference type="EMBL" id="AE014075">
    <property type="protein sequence ID" value="AAN81821.1"/>
    <property type="molecule type" value="Genomic_DNA"/>
</dbReference>
<dbReference type="RefSeq" id="WP_001045530.1">
    <property type="nucleotide sequence ID" value="NZ_CP051263.1"/>
</dbReference>
<dbReference type="SMR" id="Q8FEE5"/>
<dbReference type="STRING" id="199310.c3376"/>
<dbReference type="KEGG" id="ecc:c3376"/>
<dbReference type="eggNOG" id="COG2933">
    <property type="taxonomic scope" value="Bacteria"/>
</dbReference>
<dbReference type="HOGENOM" id="CLU_043780_0_0_6"/>
<dbReference type="BioCyc" id="ECOL199310:C3376-MONOMER"/>
<dbReference type="Proteomes" id="UP000001410">
    <property type="component" value="Chromosome"/>
</dbReference>
<dbReference type="GO" id="GO:0005737">
    <property type="term" value="C:cytoplasm"/>
    <property type="evidence" value="ECO:0007669"/>
    <property type="project" value="UniProtKB-SubCell"/>
</dbReference>
<dbReference type="GO" id="GO:0008757">
    <property type="term" value="F:S-adenosylmethionine-dependent methyltransferase activity"/>
    <property type="evidence" value="ECO:0007669"/>
    <property type="project" value="UniProtKB-UniRule"/>
</dbReference>
<dbReference type="GO" id="GO:0032259">
    <property type="term" value="P:methylation"/>
    <property type="evidence" value="ECO:0007669"/>
    <property type="project" value="UniProtKB-KW"/>
</dbReference>
<dbReference type="GO" id="GO:0006364">
    <property type="term" value="P:rRNA processing"/>
    <property type="evidence" value="ECO:0007669"/>
    <property type="project" value="UniProtKB-UniRule"/>
</dbReference>
<dbReference type="FunFam" id="3.30.2300.20:FF:000001">
    <property type="entry name" value="Ribosomal RNA large subunit methyltransferase M"/>
    <property type="match status" value="1"/>
</dbReference>
<dbReference type="FunFam" id="3.30.70.2810:FF:000001">
    <property type="entry name" value="Ribosomal RNA large subunit methyltransferase M"/>
    <property type="match status" value="1"/>
</dbReference>
<dbReference type="FunFam" id="3.40.50.150:FF:000020">
    <property type="entry name" value="Ribosomal RNA large subunit methyltransferase M"/>
    <property type="match status" value="1"/>
</dbReference>
<dbReference type="Gene3D" id="3.30.2300.20">
    <property type="match status" value="1"/>
</dbReference>
<dbReference type="Gene3D" id="3.30.70.2810">
    <property type="match status" value="1"/>
</dbReference>
<dbReference type="Gene3D" id="3.40.50.150">
    <property type="entry name" value="Vaccinia Virus protein VP39"/>
    <property type="match status" value="1"/>
</dbReference>
<dbReference type="HAMAP" id="MF_01551">
    <property type="entry name" value="23SrRNA_methyltr_M"/>
    <property type="match status" value="1"/>
</dbReference>
<dbReference type="InterPro" id="IPR040739">
    <property type="entry name" value="RlmM_FDX"/>
</dbReference>
<dbReference type="InterPro" id="IPR048646">
    <property type="entry name" value="RlmM_THUMP-like"/>
</dbReference>
<dbReference type="InterPro" id="IPR002877">
    <property type="entry name" value="RNA_MeTrfase_FtsJ_dom"/>
</dbReference>
<dbReference type="InterPro" id="IPR011224">
    <property type="entry name" value="rRNA_MeTrfase_M"/>
</dbReference>
<dbReference type="InterPro" id="IPR029063">
    <property type="entry name" value="SAM-dependent_MTases_sf"/>
</dbReference>
<dbReference type="NCBIfam" id="NF008734">
    <property type="entry name" value="PRK11760.1"/>
    <property type="match status" value="1"/>
</dbReference>
<dbReference type="PANTHER" id="PTHR37524">
    <property type="entry name" value="RIBOSOMAL RNA LARGE SUBUNIT METHYLTRANSFERASE M"/>
    <property type="match status" value="1"/>
</dbReference>
<dbReference type="PANTHER" id="PTHR37524:SF2">
    <property type="entry name" value="RIBOSOMAL RNA METHYLTRANSFERASE FTSJ DOMAIN-CONTAINING PROTEIN"/>
    <property type="match status" value="1"/>
</dbReference>
<dbReference type="Pfam" id="PF01728">
    <property type="entry name" value="FtsJ"/>
    <property type="match status" value="1"/>
</dbReference>
<dbReference type="Pfam" id="PF18125">
    <property type="entry name" value="RlmM_FDX"/>
    <property type="match status" value="1"/>
</dbReference>
<dbReference type="Pfam" id="PF21239">
    <property type="entry name" value="RLMM_N"/>
    <property type="match status" value="1"/>
</dbReference>
<dbReference type="PIRSF" id="PIRSF028774">
    <property type="entry name" value="UCP028774"/>
    <property type="match status" value="1"/>
</dbReference>
<dbReference type="SUPFAM" id="SSF53335">
    <property type="entry name" value="S-adenosyl-L-methionine-dependent methyltransferases"/>
    <property type="match status" value="1"/>
</dbReference>
<name>RLMM_ECOL6</name>
<reference key="1">
    <citation type="journal article" date="2002" name="Proc. Natl. Acad. Sci. U.S.A.">
        <title>Extensive mosaic structure revealed by the complete genome sequence of uropathogenic Escherichia coli.</title>
        <authorList>
            <person name="Welch R.A."/>
            <person name="Burland V."/>
            <person name="Plunkett G. III"/>
            <person name="Redford P."/>
            <person name="Roesch P."/>
            <person name="Rasko D."/>
            <person name="Buckles E.L."/>
            <person name="Liou S.-R."/>
            <person name="Boutin A."/>
            <person name="Hackett J."/>
            <person name="Stroud D."/>
            <person name="Mayhew G.F."/>
            <person name="Rose D.J."/>
            <person name="Zhou S."/>
            <person name="Schwartz D.C."/>
            <person name="Perna N.T."/>
            <person name="Mobley H.L.T."/>
            <person name="Donnenberg M.S."/>
            <person name="Blattner F.R."/>
        </authorList>
    </citation>
    <scope>NUCLEOTIDE SEQUENCE [LARGE SCALE GENOMIC DNA]</scope>
    <source>
        <strain>CFT073 / ATCC 700928 / UPEC</strain>
    </source>
</reference>
<protein>
    <recommendedName>
        <fullName evidence="1">Ribosomal RNA large subunit methyltransferase M</fullName>
        <ecNumber evidence="1">2.1.1.186</ecNumber>
    </recommendedName>
    <alternativeName>
        <fullName evidence="1">23S rRNA (cytidine2498-2'-O)-methyltransferase</fullName>
    </alternativeName>
    <alternativeName>
        <fullName evidence="1">23S rRNA 2'-O-ribose methyltransferase RlmM</fullName>
    </alternativeName>
</protein>
<keyword id="KW-0963">Cytoplasm</keyword>
<keyword id="KW-0489">Methyltransferase</keyword>
<keyword id="KW-1185">Reference proteome</keyword>
<keyword id="KW-0698">rRNA processing</keyword>
<keyword id="KW-0949">S-adenosyl-L-methionine</keyword>
<keyword id="KW-0808">Transferase</keyword>
<evidence type="ECO:0000255" key="1">
    <source>
        <dbReference type="HAMAP-Rule" id="MF_01551"/>
    </source>
</evidence>
<feature type="chain" id="PRO_0000070404" description="Ribosomal RNA large subunit methyltransferase M">
    <location>
        <begin position="1"/>
        <end position="366"/>
    </location>
</feature>
<feature type="active site" description="Proton acceptor" evidence="1">
    <location>
        <position position="306"/>
    </location>
</feature>
<feature type="binding site" evidence="1">
    <location>
        <position position="188"/>
    </location>
    <ligand>
        <name>S-adenosyl-L-methionine</name>
        <dbReference type="ChEBI" id="CHEBI:59789"/>
    </ligand>
</feature>
<feature type="binding site" evidence="1">
    <location>
        <begin position="221"/>
        <end position="224"/>
    </location>
    <ligand>
        <name>S-adenosyl-L-methionine</name>
        <dbReference type="ChEBI" id="CHEBI:59789"/>
    </ligand>
</feature>
<feature type="binding site" evidence="1">
    <location>
        <position position="240"/>
    </location>
    <ligand>
        <name>S-adenosyl-L-methionine</name>
        <dbReference type="ChEBI" id="CHEBI:59789"/>
    </ligand>
</feature>
<feature type="binding site" evidence="1">
    <location>
        <position position="260"/>
    </location>
    <ligand>
        <name>S-adenosyl-L-methionine</name>
        <dbReference type="ChEBI" id="CHEBI:59789"/>
    </ligand>
</feature>
<feature type="binding site" evidence="1">
    <location>
        <position position="277"/>
    </location>
    <ligand>
        <name>S-adenosyl-L-methionine</name>
        <dbReference type="ChEBI" id="CHEBI:59789"/>
    </ligand>
</feature>
<sequence length="366" mass="41878">MNKVVLLCRPGFEKECAAEITDKAGQREIFGFARVKENAGYVIYECYQPDDGDKLIRELPFSSLIFARQWFVVGELLQHLPPEDRITPIVGMLQGVVEKGGELRVEVADTNESKELLKFCRKFTVPLRAALRDAGVLANYETPKRPVVHVFFIAPGCCYTGYSYSSNNSPFYMGIPRLKFPADAPSRSTLKLEEAFHVFIPADEWDERLANGMWAVDLGACPGGWTYQLVKRNMWVYSVDNGPMAQSLMDTGQVTWLREDGFKFRPTRSNISWMVCDMVEKPAKVAALMAQWLVNGWCRETIFNLKLPMKKRYEEVSHNLAYIQAQLDEHGINAQIQARQLYHDREEVTVHVRRIWAAVGGRRDER</sequence>